<sequence length="112" mass="13508">MAEDIEEIRRKKLLELQKKLAEQKRAEEEQIRQEMELEAQLQAIMKQILTSEARERLTRVKLVRPELARQVELILVQLYQAGQITERITDEKLKRILAQIDARTRKEFRIKW</sequence>
<proteinExistence type="inferred from homology"/>
<dbReference type="EMBL" id="CP001463">
    <property type="protein sequence ID" value="ACS89591.1"/>
    <property type="molecule type" value="Genomic_DNA"/>
</dbReference>
<dbReference type="RefSeq" id="WP_015848811.1">
    <property type="nucleotide sequence ID" value="NC_012883.1"/>
</dbReference>
<dbReference type="SMR" id="C6A1U6"/>
<dbReference type="STRING" id="604354.TSIB_0525"/>
<dbReference type="GeneID" id="8095513"/>
<dbReference type="KEGG" id="tsi:TSIB_0525"/>
<dbReference type="eggNOG" id="arCOG04179">
    <property type="taxonomic scope" value="Archaea"/>
</dbReference>
<dbReference type="HOGENOM" id="CLU_122978_3_0_2"/>
<dbReference type="OrthoDB" id="7912at2157"/>
<dbReference type="Proteomes" id="UP000009079">
    <property type="component" value="Chromosome"/>
</dbReference>
<dbReference type="GO" id="GO:0005829">
    <property type="term" value="C:cytosol"/>
    <property type="evidence" value="ECO:0007669"/>
    <property type="project" value="TreeGrafter"/>
</dbReference>
<dbReference type="GO" id="GO:0003677">
    <property type="term" value="F:DNA binding"/>
    <property type="evidence" value="ECO:0007669"/>
    <property type="project" value="UniProtKB-UniRule"/>
</dbReference>
<dbReference type="Gene3D" id="1.10.8.140">
    <property type="entry name" value="PDCD5-like"/>
    <property type="match status" value="1"/>
</dbReference>
<dbReference type="HAMAP" id="MF_00026">
    <property type="entry name" value="dsDNA_bind"/>
    <property type="match status" value="1"/>
</dbReference>
<dbReference type="InterPro" id="IPR022889">
    <property type="entry name" value="DNA_bind_arc"/>
</dbReference>
<dbReference type="InterPro" id="IPR002836">
    <property type="entry name" value="PDCD5-like"/>
</dbReference>
<dbReference type="InterPro" id="IPR036883">
    <property type="entry name" value="PDCD5-like_sf"/>
</dbReference>
<dbReference type="NCBIfam" id="NF003268">
    <property type="entry name" value="PRK04239.1"/>
    <property type="match status" value="1"/>
</dbReference>
<dbReference type="PANTHER" id="PTHR10840">
    <property type="entry name" value="PROGRAMMED CELL DEATH PROTEIN 5"/>
    <property type="match status" value="1"/>
</dbReference>
<dbReference type="PANTHER" id="PTHR10840:SF0">
    <property type="entry name" value="PROGRAMMED CELL DEATH PROTEIN 5"/>
    <property type="match status" value="1"/>
</dbReference>
<dbReference type="Pfam" id="PF01984">
    <property type="entry name" value="dsDNA_bind"/>
    <property type="match status" value="1"/>
</dbReference>
<dbReference type="PIRSF" id="PIRSF015730">
    <property type="entry name" value="TFAR19"/>
    <property type="match status" value="1"/>
</dbReference>
<dbReference type="SUPFAM" id="SSF46950">
    <property type="entry name" value="Double-stranded DNA-binding domain"/>
    <property type="match status" value="1"/>
</dbReference>
<name>Y525_THESM</name>
<reference key="1">
    <citation type="journal article" date="2009" name="Appl. Environ. Microbiol.">
        <title>Metabolic versatility and indigenous origin of the archaeon Thermococcus sibiricus, isolated from a siberian oil reservoir, as revealed by genome analysis.</title>
        <authorList>
            <person name="Mardanov A.V."/>
            <person name="Ravin N.V."/>
            <person name="Svetlitchnyi V.A."/>
            <person name="Beletsky A.V."/>
            <person name="Miroshnichenko M.L."/>
            <person name="Bonch-Osmolovskaya E.A."/>
            <person name="Skryabin K.G."/>
        </authorList>
    </citation>
    <scope>NUCLEOTIDE SEQUENCE [LARGE SCALE GENOMIC DNA]</scope>
    <source>
        <strain>DSM 12597 / MM 739</strain>
    </source>
</reference>
<protein>
    <recommendedName>
        <fullName evidence="1">DNA-binding protein TSIB_0525</fullName>
    </recommendedName>
</protein>
<accession>C6A1U6</accession>
<keyword id="KW-0238">DNA-binding</keyword>
<keyword id="KW-1185">Reference proteome</keyword>
<evidence type="ECO:0000255" key="1">
    <source>
        <dbReference type="HAMAP-Rule" id="MF_00026"/>
    </source>
</evidence>
<feature type="chain" id="PRO_1000201964" description="DNA-binding protein TSIB_0525">
    <location>
        <begin position="1"/>
        <end position="112"/>
    </location>
</feature>
<comment type="similarity">
    <text evidence="1">Belongs to the PDCD5 family.</text>
</comment>
<gene>
    <name type="ordered locus">TSIB_0525</name>
</gene>
<organism>
    <name type="scientific">Thermococcus sibiricus (strain DSM 12597 / MM 739)</name>
    <dbReference type="NCBI Taxonomy" id="604354"/>
    <lineage>
        <taxon>Archaea</taxon>
        <taxon>Methanobacteriati</taxon>
        <taxon>Methanobacteriota</taxon>
        <taxon>Thermococci</taxon>
        <taxon>Thermococcales</taxon>
        <taxon>Thermococcaceae</taxon>
        <taxon>Thermococcus</taxon>
    </lineage>
</organism>